<gene>
    <name evidence="1" type="primary">rpoC</name>
    <name type="ordered locus">SPO3507</name>
</gene>
<organism>
    <name type="scientific">Ruegeria pomeroyi (strain ATCC 700808 / DSM 15171 / DSS-3)</name>
    <name type="common">Silicibacter pomeroyi</name>
    <dbReference type="NCBI Taxonomy" id="246200"/>
    <lineage>
        <taxon>Bacteria</taxon>
        <taxon>Pseudomonadati</taxon>
        <taxon>Pseudomonadota</taxon>
        <taxon>Alphaproteobacteria</taxon>
        <taxon>Rhodobacterales</taxon>
        <taxon>Roseobacteraceae</taxon>
        <taxon>Ruegeria</taxon>
    </lineage>
</organism>
<keyword id="KW-0240">DNA-directed RNA polymerase</keyword>
<keyword id="KW-0460">Magnesium</keyword>
<keyword id="KW-0479">Metal-binding</keyword>
<keyword id="KW-0548">Nucleotidyltransferase</keyword>
<keyword id="KW-1185">Reference proteome</keyword>
<keyword id="KW-0804">Transcription</keyword>
<keyword id="KW-0808">Transferase</keyword>
<keyword id="KW-0862">Zinc</keyword>
<dbReference type="EC" id="2.7.7.6" evidence="1"/>
<dbReference type="EMBL" id="CP000031">
    <property type="protein sequence ID" value="AAV96732.1"/>
    <property type="molecule type" value="Genomic_DNA"/>
</dbReference>
<dbReference type="RefSeq" id="WP_011049187.1">
    <property type="nucleotide sequence ID" value="NC_003911.12"/>
</dbReference>
<dbReference type="SMR" id="Q5LMQ6"/>
<dbReference type="STRING" id="246200.SPO3507"/>
<dbReference type="PaxDb" id="246200-SPO3507"/>
<dbReference type="KEGG" id="sil:SPO3507"/>
<dbReference type="eggNOG" id="COG0086">
    <property type="taxonomic scope" value="Bacteria"/>
</dbReference>
<dbReference type="HOGENOM" id="CLU_000524_3_1_5"/>
<dbReference type="OrthoDB" id="9815296at2"/>
<dbReference type="Proteomes" id="UP000001023">
    <property type="component" value="Chromosome"/>
</dbReference>
<dbReference type="GO" id="GO:0000428">
    <property type="term" value="C:DNA-directed RNA polymerase complex"/>
    <property type="evidence" value="ECO:0007669"/>
    <property type="project" value="UniProtKB-KW"/>
</dbReference>
<dbReference type="GO" id="GO:0003677">
    <property type="term" value="F:DNA binding"/>
    <property type="evidence" value="ECO:0007669"/>
    <property type="project" value="UniProtKB-UniRule"/>
</dbReference>
<dbReference type="GO" id="GO:0003899">
    <property type="term" value="F:DNA-directed RNA polymerase activity"/>
    <property type="evidence" value="ECO:0007669"/>
    <property type="project" value="UniProtKB-UniRule"/>
</dbReference>
<dbReference type="GO" id="GO:0000287">
    <property type="term" value="F:magnesium ion binding"/>
    <property type="evidence" value="ECO:0007669"/>
    <property type="project" value="UniProtKB-UniRule"/>
</dbReference>
<dbReference type="GO" id="GO:0008270">
    <property type="term" value="F:zinc ion binding"/>
    <property type="evidence" value="ECO:0007669"/>
    <property type="project" value="UniProtKB-UniRule"/>
</dbReference>
<dbReference type="GO" id="GO:0006351">
    <property type="term" value="P:DNA-templated transcription"/>
    <property type="evidence" value="ECO:0007669"/>
    <property type="project" value="UniProtKB-UniRule"/>
</dbReference>
<dbReference type="CDD" id="cd02655">
    <property type="entry name" value="RNAP_beta'_C"/>
    <property type="match status" value="1"/>
</dbReference>
<dbReference type="CDD" id="cd01609">
    <property type="entry name" value="RNAP_beta'_N"/>
    <property type="match status" value="1"/>
</dbReference>
<dbReference type="Gene3D" id="1.10.132.30">
    <property type="match status" value="1"/>
</dbReference>
<dbReference type="Gene3D" id="1.10.150.390">
    <property type="match status" value="1"/>
</dbReference>
<dbReference type="Gene3D" id="1.10.1790.20">
    <property type="match status" value="1"/>
</dbReference>
<dbReference type="Gene3D" id="1.10.40.90">
    <property type="match status" value="1"/>
</dbReference>
<dbReference type="Gene3D" id="2.40.40.20">
    <property type="match status" value="1"/>
</dbReference>
<dbReference type="Gene3D" id="2.40.50.100">
    <property type="match status" value="3"/>
</dbReference>
<dbReference type="Gene3D" id="4.10.860.120">
    <property type="entry name" value="RNA polymerase II, clamp domain"/>
    <property type="match status" value="1"/>
</dbReference>
<dbReference type="Gene3D" id="1.10.274.100">
    <property type="entry name" value="RNA polymerase Rpb1, domain 3"/>
    <property type="match status" value="2"/>
</dbReference>
<dbReference type="HAMAP" id="MF_01322">
    <property type="entry name" value="RNApol_bact_RpoC"/>
    <property type="match status" value="1"/>
</dbReference>
<dbReference type="InterPro" id="IPR045867">
    <property type="entry name" value="DNA-dir_RpoC_beta_prime"/>
</dbReference>
<dbReference type="InterPro" id="IPR012754">
    <property type="entry name" value="DNA-dir_RpoC_beta_prime_bact"/>
</dbReference>
<dbReference type="InterPro" id="IPR000722">
    <property type="entry name" value="RNA_pol_asu"/>
</dbReference>
<dbReference type="InterPro" id="IPR006592">
    <property type="entry name" value="RNA_pol_N"/>
</dbReference>
<dbReference type="InterPro" id="IPR007080">
    <property type="entry name" value="RNA_pol_Rpb1_1"/>
</dbReference>
<dbReference type="InterPro" id="IPR007066">
    <property type="entry name" value="RNA_pol_Rpb1_3"/>
</dbReference>
<dbReference type="InterPro" id="IPR042102">
    <property type="entry name" value="RNA_pol_Rpb1_3_sf"/>
</dbReference>
<dbReference type="InterPro" id="IPR007083">
    <property type="entry name" value="RNA_pol_Rpb1_4"/>
</dbReference>
<dbReference type="InterPro" id="IPR007081">
    <property type="entry name" value="RNA_pol_Rpb1_5"/>
</dbReference>
<dbReference type="InterPro" id="IPR044893">
    <property type="entry name" value="RNA_pol_Rpb1_clamp_domain"/>
</dbReference>
<dbReference type="InterPro" id="IPR038120">
    <property type="entry name" value="Rpb1_funnel_sf"/>
</dbReference>
<dbReference type="NCBIfam" id="TIGR02386">
    <property type="entry name" value="rpoC_TIGR"/>
    <property type="match status" value="1"/>
</dbReference>
<dbReference type="PANTHER" id="PTHR19376">
    <property type="entry name" value="DNA-DIRECTED RNA POLYMERASE"/>
    <property type="match status" value="1"/>
</dbReference>
<dbReference type="PANTHER" id="PTHR19376:SF54">
    <property type="entry name" value="DNA-DIRECTED RNA POLYMERASE SUBUNIT BETA"/>
    <property type="match status" value="1"/>
</dbReference>
<dbReference type="Pfam" id="PF04997">
    <property type="entry name" value="RNA_pol_Rpb1_1"/>
    <property type="match status" value="1"/>
</dbReference>
<dbReference type="Pfam" id="PF00623">
    <property type="entry name" value="RNA_pol_Rpb1_2"/>
    <property type="match status" value="2"/>
</dbReference>
<dbReference type="Pfam" id="PF04983">
    <property type="entry name" value="RNA_pol_Rpb1_3"/>
    <property type="match status" value="1"/>
</dbReference>
<dbReference type="Pfam" id="PF05000">
    <property type="entry name" value="RNA_pol_Rpb1_4"/>
    <property type="match status" value="1"/>
</dbReference>
<dbReference type="Pfam" id="PF04998">
    <property type="entry name" value="RNA_pol_Rpb1_5"/>
    <property type="match status" value="1"/>
</dbReference>
<dbReference type="SMART" id="SM00663">
    <property type="entry name" value="RPOLA_N"/>
    <property type="match status" value="1"/>
</dbReference>
<dbReference type="SUPFAM" id="SSF64484">
    <property type="entry name" value="beta and beta-prime subunits of DNA dependent RNA-polymerase"/>
    <property type="match status" value="1"/>
</dbReference>
<comment type="function">
    <text evidence="1">DNA-dependent RNA polymerase catalyzes the transcription of DNA into RNA using the four ribonucleoside triphosphates as substrates.</text>
</comment>
<comment type="catalytic activity">
    <reaction evidence="1">
        <text>RNA(n) + a ribonucleoside 5'-triphosphate = RNA(n+1) + diphosphate</text>
        <dbReference type="Rhea" id="RHEA:21248"/>
        <dbReference type="Rhea" id="RHEA-COMP:14527"/>
        <dbReference type="Rhea" id="RHEA-COMP:17342"/>
        <dbReference type="ChEBI" id="CHEBI:33019"/>
        <dbReference type="ChEBI" id="CHEBI:61557"/>
        <dbReference type="ChEBI" id="CHEBI:140395"/>
        <dbReference type="EC" id="2.7.7.6"/>
    </reaction>
</comment>
<comment type="cofactor">
    <cofactor evidence="1">
        <name>Mg(2+)</name>
        <dbReference type="ChEBI" id="CHEBI:18420"/>
    </cofactor>
    <text evidence="1">Binds 1 Mg(2+) ion per subunit.</text>
</comment>
<comment type="cofactor">
    <cofactor evidence="1">
        <name>Zn(2+)</name>
        <dbReference type="ChEBI" id="CHEBI:29105"/>
    </cofactor>
    <text evidence="1">Binds 2 Zn(2+) ions per subunit.</text>
</comment>
<comment type="subunit">
    <text evidence="1">The RNAP catalytic core consists of 2 alpha, 1 beta, 1 beta' and 1 omega subunit. When a sigma factor is associated with the core the holoenzyme is formed, which can initiate transcription.</text>
</comment>
<comment type="similarity">
    <text evidence="1">Belongs to the RNA polymerase beta' chain family.</text>
</comment>
<proteinExistence type="inferred from homology"/>
<accession>Q5LMQ6</accession>
<reference key="1">
    <citation type="journal article" date="2004" name="Nature">
        <title>Genome sequence of Silicibacter pomeroyi reveals adaptations to the marine environment.</title>
        <authorList>
            <person name="Moran M.A."/>
            <person name="Buchan A."/>
            <person name="Gonzalez J.M."/>
            <person name="Heidelberg J.F."/>
            <person name="Whitman W.B."/>
            <person name="Kiene R.P."/>
            <person name="Henriksen J.R."/>
            <person name="King G.M."/>
            <person name="Belas R."/>
            <person name="Fuqua C."/>
            <person name="Brinkac L.M."/>
            <person name="Lewis M."/>
            <person name="Johri S."/>
            <person name="Weaver B."/>
            <person name="Pai G."/>
            <person name="Eisen J.A."/>
            <person name="Rahe E."/>
            <person name="Sheldon W.M."/>
            <person name="Ye W."/>
            <person name="Miller T.R."/>
            <person name="Carlton J."/>
            <person name="Rasko D.A."/>
            <person name="Paulsen I.T."/>
            <person name="Ren Q."/>
            <person name="Daugherty S.C."/>
            <person name="DeBoy R.T."/>
            <person name="Dodson R.J."/>
            <person name="Durkin A.S."/>
            <person name="Madupu R."/>
            <person name="Nelson W.C."/>
            <person name="Sullivan S.A."/>
            <person name="Rosovitz M.J."/>
            <person name="Haft D.H."/>
            <person name="Selengut J."/>
            <person name="Ward N."/>
        </authorList>
    </citation>
    <scope>NUCLEOTIDE SEQUENCE [LARGE SCALE GENOMIC DNA]</scope>
    <source>
        <strain>ATCC 700808 / DSM 15171 / DSS-3</strain>
    </source>
</reference>
<reference key="2">
    <citation type="journal article" date="2014" name="Stand. Genomic Sci.">
        <title>An updated genome annotation for the model marine bacterium Ruegeria pomeroyi DSS-3.</title>
        <authorList>
            <person name="Rivers A.R."/>
            <person name="Smith C.B."/>
            <person name="Moran M.A."/>
        </authorList>
    </citation>
    <scope>GENOME REANNOTATION</scope>
    <source>
        <strain>ATCC 700808 / DSM 15171 / DSS-3</strain>
    </source>
</reference>
<sequence length="1413" mass="156806">MNQELTNNPFNPLTPPKVFDEIKVSLASPERILSWSYGEIKKPETINYRTFKPERDGLFCARIFGPIKDYECLCGKYKRMKYRGVVCEKCGVEVTLQKVRRERMGHIELAAPVAHIWFLKSLPSRIGLMLDMTLRDLERILYFENYVVTEPGLTDLTYGQLMTEEEFMDAQDQYGMDAFTANIGAEAIREMLSQIDLEAEAEQLRADLAEATGELKPKKIIKRLKVVESFLESGNRPEWMVLTVIPVIPPELRPLVPLDGGRFATSDLNDLYRRVINRNNRLKRLIELRAPDIIVRNEKRMLQESVDALFDNGRRGRVITGANKRPLKSLSDMLKGKQGRFRQNLLGKRVDFSGRSVIVTGPELKLHQCGLPKKMALELFKPFIYSRLEAKGLSSTVKQAKKLVEKERPEVWDILDEVIREHPVLLNRAPTLHRLGIQAFEPILIEGKAIQLHPLVCSAFNADFDGDQMAVHVPLSLEAQLEARVLMMSTNNVLSPANGAPIIVPSQDMILGLYYLTLEREGMVGEGKIFGSIDEVQHALDAGEVHLHTKITARIAQIDDEGNEVLKRVETTPGRVRLGALLPMNNKAPFELVNRLLRKKEVQQVIDTVYRYCGQKESVIFCDQIMTMGFREAFKAGISFGKDDMVIPDDKWGIVDETRDQVKDFEQQYMDGLITQGEKYNKVVDAWSKCNDRVTEAMMSTISADKRDENGAVMEPNSVYMMAHSGARGSVTQMKQLGGMRGLMAKPNGDIIETPIISNFKEGLTVLEYFNSTHGARKGLSDTALKTANSGYLTRRLVDVAQDCIVREHDCGTDRGVTAEAAVNDGEVVASLAERVLGRVAADDILRPGTEEVLVAAGQLIDERMADAIHEAGVQTSRVRSPLTCESEEGVCAMCYGRDLARGTMVNQGEAVGIIAAQSIGEPGTQLTMRTFHIGGVAQGGQQSFQEANQDGTITFENPQLLLNASGESLVMGRNMKLLIKDAQGEERASFKLGYGSKLFVKDGAQIKRGDKLFEWDPYTLPIIAEKAGTAKYVDLVSGIAVRDETDEATGMTQKIVIDWRAAPKGSDLKPEIILVDSDGEPVRNDAGNPVHYPMSVDAILSIEDGQVIEAGDVIARIPREGAKTKDITGGLPRVAELFEARRPKDHAIIAEIDGYVRFGRDYKNKRRISIEPSNEAMEPVEYMVPKGKHIPVQEGDFVQKGDYIMDGNPAPHDILSILGVEALANYMVKEVQEVYRLQGVKINDKHIEVIVRQMLQKWEISDSGDTTLLKGEHVDKQEFDAANEKTIARGGRPASGEPILLGITKASLQTRSFISAASFQETTRVLTEASVQGKKDKLVGLKENVIVGRLIPAGTGGATQQMRHIATQRDNVVIAARREEAEAAAALAAPIMDADIVDDDFDTLVDTPESRD</sequence>
<evidence type="ECO:0000255" key="1">
    <source>
        <dbReference type="HAMAP-Rule" id="MF_01322"/>
    </source>
</evidence>
<name>RPOC_RUEPO</name>
<protein>
    <recommendedName>
        <fullName evidence="1">DNA-directed RNA polymerase subunit beta'</fullName>
        <shortName evidence="1">RNAP subunit beta'</shortName>
        <ecNumber evidence="1">2.7.7.6</ecNumber>
    </recommendedName>
    <alternativeName>
        <fullName evidence="1">RNA polymerase subunit beta'</fullName>
    </alternativeName>
    <alternativeName>
        <fullName evidence="1">Transcriptase subunit beta'</fullName>
    </alternativeName>
</protein>
<feature type="chain" id="PRO_0000225580" description="DNA-directed RNA polymerase subunit beta'">
    <location>
        <begin position="1"/>
        <end position="1413"/>
    </location>
</feature>
<feature type="binding site" evidence="1">
    <location>
        <position position="72"/>
    </location>
    <ligand>
        <name>Zn(2+)</name>
        <dbReference type="ChEBI" id="CHEBI:29105"/>
        <label>1</label>
    </ligand>
</feature>
<feature type="binding site" evidence="1">
    <location>
        <position position="74"/>
    </location>
    <ligand>
        <name>Zn(2+)</name>
        <dbReference type="ChEBI" id="CHEBI:29105"/>
        <label>1</label>
    </ligand>
</feature>
<feature type="binding site" evidence="1">
    <location>
        <position position="87"/>
    </location>
    <ligand>
        <name>Zn(2+)</name>
        <dbReference type="ChEBI" id="CHEBI:29105"/>
        <label>1</label>
    </ligand>
</feature>
<feature type="binding site" evidence="1">
    <location>
        <position position="90"/>
    </location>
    <ligand>
        <name>Zn(2+)</name>
        <dbReference type="ChEBI" id="CHEBI:29105"/>
        <label>1</label>
    </ligand>
</feature>
<feature type="binding site" evidence="1">
    <location>
        <position position="463"/>
    </location>
    <ligand>
        <name>Mg(2+)</name>
        <dbReference type="ChEBI" id="CHEBI:18420"/>
    </ligand>
</feature>
<feature type="binding site" evidence="1">
    <location>
        <position position="465"/>
    </location>
    <ligand>
        <name>Mg(2+)</name>
        <dbReference type="ChEBI" id="CHEBI:18420"/>
    </ligand>
</feature>
<feature type="binding site" evidence="1">
    <location>
        <position position="467"/>
    </location>
    <ligand>
        <name>Mg(2+)</name>
        <dbReference type="ChEBI" id="CHEBI:18420"/>
    </ligand>
</feature>
<feature type="binding site" evidence="1">
    <location>
        <position position="811"/>
    </location>
    <ligand>
        <name>Zn(2+)</name>
        <dbReference type="ChEBI" id="CHEBI:29105"/>
        <label>2</label>
    </ligand>
</feature>
<feature type="binding site" evidence="1">
    <location>
        <position position="885"/>
    </location>
    <ligand>
        <name>Zn(2+)</name>
        <dbReference type="ChEBI" id="CHEBI:29105"/>
        <label>2</label>
    </ligand>
</feature>
<feature type="binding site" evidence="1">
    <location>
        <position position="892"/>
    </location>
    <ligand>
        <name>Zn(2+)</name>
        <dbReference type="ChEBI" id="CHEBI:29105"/>
        <label>2</label>
    </ligand>
</feature>
<feature type="binding site" evidence="1">
    <location>
        <position position="895"/>
    </location>
    <ligand>
        <name>Zn(2+)</name>
        <dbReference type="ChEBI" id="CHEBI:29105"/>
        <label>2</label>
    </ligand>
</feature>